<comment type="catalytic activity">
    <reaction evidence="2">
        <text>D-glyceraldehyde 3-phosphate + phosphate + NAD(+) = (2R)-3-phospho-glyceroyl phosphate + NADH + H(+)</text>
        <dbReference type="Rhea" id="RHEA:10300"/>
        <dbReference type="ChEBI" id="CHEBI:15378"/>
        <dbReference type="ChEBI" id="CHEBI:43474"/>
        <dbReference type="ChEBI" id="CHEBI:57540"/>
        <dbReference type="ChEBI" id="CHEBI:57604"/>
        <dbReference type="ChEBI" id="CHEBI:57945"/>
        <dbReference type="ChEBI" id="CHEBI:59776"/>
        <dbReference type="EC" id="1.2.1.12"/>
    </reaction>
</comment>
<comment type="pathway">
    <text>Carbohydrate degradation; glycolysis; pyruvate from D-glyceraldehyde 3-phosphate: step 1/5.</text>
</comment>
<comment type="subunit">
    <text evidence="1">Homotetramer.</text>
</comment>
<comment type="subcellular location">
    <subcellularLocation>
        <location evidence="1">Cytoplasm</location>
    </subcellularLocation>
</comment>
<comment type="similarity">
    <text evidence="3">Belongs to the glyceraldehyde-3-phosphate dehydrogenase family.</text>
</comment>
<keyword id="KW-0963">Cytoplasm</keyword>
<keyword id="KW-0324">Glycolysis</keyword>
<keyword id="KW-0520">NAD</keyword>
<keyword id="KW-0560">Oxidoreductase</keyword>
<dbReference type="EC" id="1.2.1.12"/>
<dbReference type="EMBL" id="Y12542">
    <property type="protein sequence ID" value="CAA73141.1"/>
    <property type="molecule type" value="mRNA"/>
</dbReference>
<dbReference type="SMR" id="P87197"/>
<dbReference type="UniPathway" id="UPA00109">
    <property type="reaction ID" value="UER00184"/>
</dbReference>
<dbReference type="GO" id="GO:0005829">
    <property type="term" value="C:cytosol"/>
    <property type="evidence" value="ECO:0007669"/>
    <property type="project" value="TreeGrafter"/>
</dbReference>
<dbReference type="GO" id="GO:0004365">
    <property type="term" value="F:glyceraldehyde-3-phosphate dehydrogenase (NAD+) (phosphorylating) activity"/>
    <property type="evidence" value="ECO:0007669"/>
    <property type="project" value="UniProtKB-EC"/>
</dbReference>
<dbReference type="GO" id="GO:0051287">
    <property type="term" value="F:NAD binding"/>
    <property type="evidence" value="ECO:0007669"/>
    <property type="project" value="InterPro"/>
</dbReference>
<dbReference type="GO" id="GO:0050661">
    <property type="term" value="F:NADP binding"/>
    <property type="evidence" value="ECO:0007669"/>
    <property type="project" value="InterPro"/>
</dbReference>
<dbReference type="GO" id="GO:0006006">
    <property type="term" value="P:glucose metabolic process"/>
    <property type="evidence" value="ECO:0007669"/>
    <property type="project" value="InterPro"/>
</dbReference>
<dbReference type="GO" id="GO:0006096">
    <property type="term" value="P:glycolytic process"/>
    <property type="evidence" value="ECO:0007669"/>
    <property type="project" value="UniProtKB-UniPathway"/>
</dbReference>
<dbReference type="CDD" id="cd18126">
    <property type="entry name" value="GAPDH_I_C"/>
    <property type="match status" value="1"/>
</dbReference>
<dbReference type="CDD" id="cd05214">
    <property type="entry name" value="GAPDH_I_N"/>
    <property type="match status" value="1"/>
</dbReference>
<dbReference type="FunFam" id="3.30.360.10:FF:000001">
    <property type="entry name" value="Glyceraldehyde-3-phosphate dehydrogenase"/>
    <property type="match status" value="1"/>
</dbReference>
<dbReference type="FunFam" id="3.40.50.720:FF:000020">
    <property type="entry name" value="Glyceraldehyde-3-phosphate dehydrogenase"/>
    <property type="match status" value="1"/>
</dbReference>
<dbReference type="Gene3D" id="3.30.360.10">
    <property type="entry name" value="Dihydrodipicolinate Reductase, domain 2"/>
    <property type="match status" value="1"/>
</dbReference>
<dbReference type="Gene3D" id="3.40.50.720">
    <property type="entry name" value="NAD(P)-binding Rossmann-like Domain"/>
    <property type="match status" value="1"/>
</dbReference>
<dbReference type="InterPro" id="IPR020831">
    <property type="entry name" value="GlycerAld/Erythrose_P_DH"/>
</dbReference>
<dbReference type="InterPro" id="IPR020830">
    <property type="entry name" value="GlycerAld_3-P_DH_AS"/>
</dbReference>
<dbReference type="InterPro" id="IPR020829">
    <property type="entry name" value="GlycerAld_3-P_DH_cat"/>
</dbReference>
<dbReference type="InterPro" id="IPR020828">
    <property type="entry name" value="GlycerAld_3-P_DH_NAD(P)-bd"/>
</dbReference>
<dbReference type="InterPro" id="IPR006424">
    <property type="entry name" value="Glyceraldehyde-3-P_DH_1"/>
</dbReference>
<dbReference type="InterPro" id="IPR036291">
    <property type="entry name" value="NAD(P)-bd_dom_sf"/>
</dbReference>
<dbReference type="NCBIfam" id="TIGR01534">
    <property type="entry name" value="GAPDH-I"/>
    <property type="match status" value="1"/>
</dbReference>
<dbReference type="PANTHER" id="PTHR10836">
    <property type="entry name" value="GLYCERALDEHYDE 3-PHOSPHATE DEHYDROGENASE"/>
    <property type="match status" value="1"/>
</dbReference>
<dbReference type="PANTHER" id="PTHR10836:SF76">
    <property type="entry name" value="GLYCERALDEHYDE-3-PHOSPHATE DEHYDROGENASE-RELATED"/>
    <property type="match status" value="1"/>
</dbReference>
<dbReference type="Pfam" id="PF02800">
    <property type="entry name" value="Gp_dh_C"/>
    <property type="match status" value="1"/>
</dbReference>
<dbReference type="Pfam" id="PF00044">
    <property type="entry name" value="Gp_dh_N"/>
    <property type="match status" value="1"/>
</dbReference>
<dbReference type="PIRSF" id="PIRSF000149">
    <property type="entry name" value="GAP_DH"/>
    <property type="match status" value="1"/>
</dbReference>
<dbReference type="PRINTS" id="PR00078">
    <property type="entry name" value="G3PDHDRGNASE"/>
</dbReference>
<dbReference type="SMART" id="SM00846">
    <property type="entry name" value="Gp_dh_N"/>
    <property type="match status" value="1"/>
</dbReference>
<dbReference type="SUPFAM" id="SSF55347">
    <property type="entry name" value="Glyceraldehyde-3-phosphate dehydrogenase-like, C-terminal domain"/>
    <property type="match status" value="1"/>
</dbReference>
<dbReference type="SUPFAM" id="SSF51735">
    <property type="entry name" value="NAD(P)-binding Rossmann-fold domains"/>
    <property type="match status" value="1"/>
</dbReference>
<dbReference type="PROSITE" id="PS00071">
    <property type="entry name" value="GAPDH"/>
    <property type="match status" value="1"/>
</dbReference>
<protein>
    <recommendedName>
        <fullName>Glyceraldehyde-3-phosphate dehydrogenase</fullName>
        <shortName>GAPDH</shortName>
        <ecNumber>1.2.1.12</ecNumber>
    </recommendedName>
</protein>
<feature type="chain" id="PRO_0000145584" description="Glyceraldehyde-3-phosphate dehydrogenase">
    <location>
        <begin position="1"/>
        <end position="338"/>
    </location>
</feature>
<feature type="active site" description="Nucleophile" evidence="2">
    <location>
        <position position="151"/>
    </location>
</feature>
<feature type="binding site" evidence="1">
    <location>
        <begin position="12"/>
        <end position="13"/>
    </location>
    <ligand>
        <name>NAD(+)</name>
        <dbReference type="ChEBI" id="CHEBI:57540"/>
    </ligand>
</feature>
<feature type="binding site" evidence="1">
    <location>
        <position position="34"/>
    </location>
    <ligand>
        <name>NAD(+)</name>
        <dbReference type="ChEBI" id="CHEBI:57540"/>
    </ligand>
</feature>
<feature type="binding site" evidence="1">
    <location>
        <position position="79"/>
    </location>
    <ligand>
        <name>NAD(+)</name>
        <dbReference type="ChEBI" id="CHEBI:57540"/>
    </ligand>
</feature>
<feature type="binding site" evidence="1">
    <location>
        <begin position="150"/>
        <end position="152"/>
    </location>
    <ligand>
        <name>D-glyceraldehyde 3-phosphate</name>
        <dbReference type="ChEBI" id="CHEBI:59776"/>
    </ligand>
</feature>
<feature type="binding site" evidence="1">
    <location>
        <position position="181"/>
    </location>
    <ligand>
        <name>D-glyceraldehyde 3-phosphate</name>
        <dbReference type="ChEBI" id="CHEBI:59776"/>
    </ligand>
</feature>
<feature type="binding site" evidence="1">
    <location>
        <begin position="210"/>
        <end position="211"/>
    </location>
    <ligand>
        <name>D-glyceraldehyde 3-phosphate</name>
        <dbReference type="ChEBI" id="CHEBI:59776"/>
    </ligand>
</feature>
<feature type="binding site" evidence="1">
    <location>
        <position position="233"/>
    </location>
    <ligand>
        <name>D-glyceraldehyde 3-phosphate</name>
        <dbReference type="ChEBI" id="CHEBI:59776"/>
    </ligand>
</feature>
<feature type="binding site" evidence="1">
    <location>
        <position position="315"/>
    </location>
    <ligand>
        <name>NAD(+)</name>
        <dbReference type="ChEBI" id="CHEBI:57540"/>
    </ligand>
</feature>
<feature type="site" description="Activates thiol group during catalysis" evidence="1">
    <location>
        <position position="178"/>
    </location>
</feature>
<gene>
    <name type="primary">gpd1</name>
    <name type="synonym">gpd</name>
</gene>
<sequence length="338" mass="36199">MSIKVGINGFGRIGRILLSNALEKPELSVVAVNDPFIEPTYAAYMLKYDSSHGLFKGDIEVDGQNLVVNGKPIRFYSERDPANIKWSETGAEYIVESTGVFTTIDKAKAHLNGGAKKVIISAPSADAPMFVMGVNHKDYDGTPTVLSNASCTTNGLAPLVKIVNDNFGIVEGLMTTVHSYTATQKTVDGPSGKDWRGGRGAAQNIIPSSTGAAKAVGKVIPAMNGKITGMSFRVPSANVSVIDLTVRLEKAASYEEITSAIKKAADGELKGIMAYTSDEVVSTDMLGNNNSSIFDIKAGISLNPNFVKLVSWYDNEWGYSRRVLDLLEHVAKVDASKK</sequence>
<proteinExistence type="evidence at transcript level"/>
<reference key="1">
    <citation type="journal article" date="1997" name="Microbiology">
        <title>Glyceraldehyde-3-phosphate dehydrogenase expression in Trichoderma harzianum is repressed during conidiation and mycoparasitism.</title>
        <authorList>
            <person name="Puyesky M."/>
            <person name="Ponce-Noyola P."/>
            <person name="Horwitz B.A."/>
            <person name="Herrera-Estrella A."/>
        </authorList>
    </citation>
    <scope>NUCLEOTIDE SEQUENCE [MRNA]</scope>
    <source>
        <strain>ATCC 32173 / CBS 396.92 / M2042</strain>
    </source>
</reference>
<accession>P87197</accession>
<evidence type="ECO:0000250" key="1"/>
<evidence type="ECO:0000255" key="2">
    <source>
        <dbReference type="PROSITE-ProRule" id="PRU10009"/>
    </source>
</evidence>
<evidence type="ECO:0000305" key="3"/>
<name>G3P_HYPAT</name>
<organism>
    <name type="scientific">Hypocrea atroviridis</name>
    <name type="common">Trichoderma atroviride</name>
    <dbReference type="NCBI Taxonomy" id="63577"/>
    <lineage>
        <taxon>Eukaryota</taxon>
        <taxon>Fungi</taxon>
        <taxon>Dikarya</taxon>
        <taxon>Ascomycota</taxon>
        <taxon>Pezizomycotina</taxon>
        <taxon>Sordariomycetes</taxon>
        <taxon>Hypocreomycetidae</taxon>
        <taxon>Hypocreales</taxon>
        <taxon>Hypocreaceae</taxon>
        <taxon>Trichoderma</taxon>
    </lineage>
</organism>